<keyword id="KW-0963">Cytoplasm</keyword>
<keyword id="KW-0324">Glycolysis</keyword>
<keyword id="KW-0456">Lyase</keyword>
<keyword id="KW-0460">Magnesium</keyword>
<keyword id="KW-0479">Metal-binding</keyword>
<keyword id="KW-1185">Reference proteome</keyword>
<keyword id="KW-0964">Secreted</keyword>
<name>ENO_BREBN</name>
<protein>
    <recommendedName>
        <fullName evidence="1">Enolase</fullName>
        <ecNumber evidence="1">4.2.1.11</ecNumber>
    </recommendedName>
    <alternativeName>
        <fullName evidence="1">2-phospho-D-glycerate hydro-lyase</fullName>
    </alternativeName>
    <alternativeName>
        <fullName evidence="1">2-phosphoglycerate dehydratase</fullName>
    </alternativeName>
</protein>
<comment type="function">
    <text evidence="1">Catalyzes the reversible conversion of 2-phosphoglycerate (2-PG) into phosphoenolpyruvate (PEP). It is essential for the degradation of carbohydrates via glycolysis.</text>
</comment>
<comment type="catalytic activity">
    <reaction evidence="1">
        <text>(2R)-2-phosphoglycerate = phosphoenolpyruvate + H2O</text>
        <dbReference type="Rhea" id="RHEA:10164"/>
        <dbReference type="ChEBI" id="CHEBI:15377"/>
        <dbReference type="ChEBI" id="CHEBI:58289"/>
        <dbReference type="ChEBI" id="CHEBI:58702"/>
        <dbReference type="EC" id="4.2.1.11"/>
    </reaction>
</comment>
<comment type="cofactor">
    <cofactor evidence="1">
        <name>Mg(2+)</name>
        <dbReference type="ChEBI" id="CHEBI:18420"/>
    </cofactor>
    <text evidence="1">Binds a second Mg(2+) ion via substrate during catalysis.</text>
</comment>
<comment type="pathway">
    <text evidence="1">Carbohydrate degradation; glycolysis; pyruvate from D-glyceraldehyde 3-phosphate: step 4/5.</text>
</comment>
<comment type="subcellular location">
    <subcellularLocation>
        <location evidence="1">Cytoplasm</location>
    </subcellularLocation>
    <subcellularLocation>
        <location evidence="1">Secreted</location>
    </subcellularLocation>
    <subcellularLocation>
        <location evidence="1">Cell surface</location>
    </subcellularLocation>
    <text evidence="1">Fractions of enolase are present in both the cytoplasm and on the cell surface.</text>
</comment>
<comment type="similarity">
    <text evidence="1">Belongs to the enolase family.</text>
</comment>
<sequence length="428" mass="45948">MAMITDIYAREIMDSRGNPTVEVEVYLEDGSMGRADVPSGASTGAYEAVELRDGDKSRYLGKGVLKAVENVNEIIAPELIGMDALDQVGIDMAMIQLDGTPNKGKLGANAILGVSMAVARAAAESLGVPLYNYLGGFNARMLPVPMMNILNGGKHADNTVDIQEFMVMPVGATSFKEALRTGAEIFHSLKKVLGEKGLSTAVGDEGGFAPNLKSNEEAITTILDAIKAAGYEPGKDVFLALDVAATEMFKDGKYHFEGEGVVKTTEEMIAFYEDLVNKYPIISIEDGLSEDDWDGWKALTDKLGSKVQLVGDDLFVTNTERLARGIETSTGNSILVKVNQIGTLTETFEAIEMAKLAGYTAVISHRSGETEDSTISDIAVATNAGQIKTGAPSRTDRVAKYNQLLRIEDELADTARFGGRSAFYNLKK</sequence>
<feature type="chain" id="PRO_1000132987" description="Enolase">
    <location>
        <begin position="1"/>
        <end position="428"/>
    </location>
</feature>
<feature type="active site" description="Proton donor" evidence="1">
    <location>
        <position position="205"/>
    </location>
</feature>
<feature type="active site" description="Proton acceptor" evidence="1">
    <location>
        <position position="337"/>
    </location>
</feature>
<feature type="binding site" evidence="1">
    <location>
        <position position="163"/>
    </location>
    <ligand>
        <name>(2R)-2-phosphoglycerate</name>
        <dbReference type="ChEBI" id="CHEBI:58289"/>
    </ligand>
</feature>
<feature type="binding site" evidence="1">
    <location>
        <position position="242"/>
    </location>
    <ligand>
        <name>Mg(2+)</name>
        <dbReference type="ChEBI" id="CHEBI:18420"/>
    </ligand>
</feature>
<feature type="binding site" evidence="1">
    <location>
        <position position="285"/>
    </location>
    <ligand>
        <name>Mg(2+)</name>
        <dbReference type="ChEBI" id="CHEBI:18420"/>
    </ligand>
</feature>
<feature type="binding site" evidence="1">
    <location>
        <position position="312"/>
    </location>
    <ligand>
        <name>Mg(2+)</name>
        <dbReference type="ChEBI" id="CHEBI:18420"/>
    </ligand>
</feature>
<feature type="binding site" evidence="1">
    <location>
        <position position="337"/>
    </location>
    <ligand>
        <name>(2R)-2-phosphoglycerate</name>
        <dbReference type="ChEBI" id="CHEBI:58289"/>
    </ligand>
</feature>
<feature type="binding site" evidence="1">
    <location>
        <position position="366"/>
    </location>
    <ligand>
        <name>(2R)-2-phosphoglycerate</name>
        <dbReference type="ChEBI" id="CHEBI:58289"/>
    </ligand>
</feature>
<feature type="binding site" evidence="1">
    <location>
        <position position="367"/>
    </location>
    <ligand>
        <name>(2R)-2-phosphoglycerate</name>
        <dbReference type="ChEBI" id="CHEBI:58289"/>
    </ligand>
</feature>
<feature type="binding site" evidence="1">
    <location>
        <position position="388"/>
    </location>
    <ligand>
        <name>(2R)-2-phosphoglycerate</name>
        <dbReference type="ChEBI" id="CHEBI:58289"/>
    </ligand>
</feature>
<organism>
    <name type="scientific">Brevibacillus brevis (strain 47 / JCM 6285 / NBRC 100599)</name>
    <dbReference type="NCBI Taxonomy" id="358681"/>
    <lineage>
        <taxon>Bacteria</taxon>
        <taxon>Bacillati</taxon>
        <taxon>Bacillota</taxon>
        <taxon>Bacilli</taxon>
        <taxon>Bacillales</taxon>
        <taxon>Paenibacillaceae</taxon>
        <taxon>Brevibacillus</taxon>
    </lineage>
</organism>
<gene>
    <name evidence="1" type="primary">eno</name>
    <name type="ordered locus">BBR47_52350</name>
</gene>
<proteinExistence type="inferred from homology"/>
<reference key="1">
    <citation type="submission" date="2005-03" db="EMBL/GenBank/DDBJ databases">
        <title>Brevibacillus brevis strain 47, complete genome.</title>
        <authorList>
            <person name="Hosoyama A."/>
            <person name="Yamada R."/>
            <person name="Hongo Y."/>
            <person name="Terui Y."/>
            <person name="Ankai A."/>
            <person name="Masuyama W."/>
            <person name="Sekiguchi M."/>
            <person name="Takeda T."/>
            <person name="Asano K."/>
            <person name="Ohji S."/>
            <person name="Ichikawa N."/>
            <person name="Narita S."/>
            <person name="Aoki N."/>
            <person name="Miura H."/>
            <person name="Matsushita S."/>
            <person name="Sekigawa T."/>
            <person name="Yamagata H."/>
            <person name="Yoshikawa H."/>
            <person name="Udaka S."/>
            <person name="Tanikawa S."/>
            <person name="Fujita N."/>
        </authorList>
    </citation>
    <scope>NUCLEOTIDE SEQUENCE [LARGE SCALE GENOMIC DNA]</scope>
    <source>
        <strain>47 / JCM 6285 / NBRC 100599</strain>
    </source>
</reference>
<dbReference type="EC" id="4.2.1.11" evidence="1"/>
<dbReference type="EMBL" id="AP008955">
    <property type="protein sequence ID" value="BAH46212.1"/>
    <property type="molecule type" value="Genomic_DNA"/>
</dbReference>
<dbReference type="RefSeq" id="WP_015893463.1">
    <property type="nucleotide sequence ID" value="NC_012491.1"/>
</dbReference>
<dbReference type="SMR" id="C0Z6L3"/>
<dbReference type="STRING" id="358681.BBR47_52350"/>
<dbReference type="KEGG" id="bbe:BBR47_52350"/>
<dbReference type="eggNOG" id="COG0148">
    <property type="taxonomic scope" value="Bacteria"/>
</dbReference>
<dbReference type="HOGENOM" id="CLU_031223_2_1_9"/>
<dbReference type="UniPathway" id="UPA00109">
    <property type="reaction ID" value="UER00187"/>
</dbReference>
<dbReference type="Proteomes" id="UP000001877">
    <property type="component" value="Chromosome"/>
</dbReference>
<dbReference type="GO" id="GO:0009986">
    <property type="term" value="C:cell surface"/>
    <property type="evidence" value="ECO:0007669"/>
    <property type="project" value="UniProtKB-SubCell"/>
</dbReference>
<dbReference type="GO" id="GO:0005576">
    <property type="term" value="C:extracellular region"/>
    <property type="evidence" value="ECO:0007669"/>
    <property type="project" value="UniProtKB-SubCell"/>
</dbReference>
<dbReference type="GO" id="GO:0000015">
    <property type="term" value="C:phosphopyruvate hydratase complex"/>
    <property type="evidence" value="ECO:0007669"/>
    <property type="project" value="InterPro"/>
</dbReference>
<dbReference type="GO" id="GO:0000287">
    <property type="term" value="F:magnesium ion binding"/>
    <property type="evidence" value="ECO:0007669"/>
    <property type="project" value="UniProtKB-UniRule"/>
</dbReference>
<dbReference type="GO" id="GO:0004634">
    <property type="term" value="F:phosphopyruvate hydratase activity"/>
    <property type="evidence" value="ECO:0007669"/>
    <property type="project" value="UniProtKB-UniRule"/>
</dbReference>
<dbReference type="GO" id="GO:0006096">
    <property type="term" value="P:glycolytic process"/>
    <property type="evidence" value="ECO:0007669"/>
    <property type="project" value="UniProtKB-UniRule"/>
</dbReference>
<dbReference type="CDD" id="cd03313">
    <property type="entry name" value="enolase"/>
    <property type="match status" value="1"/>
</dbReference>
<dbReference type="FunFam" id="3.20.20.120:FF:000001">
    <property type="entry name" value="Enolase"/>
    <property type="match status" value="1"/>
</dbReference>
<dbReference type="FunFam" id="3.30.390.10:FF:000001">
    <property type="entry name" value="Enolase"/>
    <property type="match status" value="1"/>
</dbReference>
<dbReference type="Gene3D" id="3.20.20.120">
    <property type="entry name" value="Enolase-like C-terminal domain"/>
    <property type="match status" value="1"/>
</dbReference>
<dbReference type="Gene3D" id="3.30.390.10">
    <property type="entry name" value="Enolase-like, N-terminal domain"/>
    <property type="match status" value="1"/>
</dbReference>
<dbReference type="HAMAP" id="MF_00318">
    <property type="entry name" value="Enolase"/>
    <property type="match status" value="1"/>
</dbReference>
<dbReference type="InterPro" id="IPR000941">
    <property type="entry name" value="Enolase"/>
</dbReference>
<dbReference type="InterPro" id="IPR036849">
    <property type="entry name" value="Enolase-like_C_sf"/>
</dbReference>
<dbReference type="InterPro" id="IPR029017">
    <property type="entry name" value="Enolase-like_N"/>
</dbReference>
<dbReference type="InterPro" id="IPR020810">
    <property type="entry name" value="Enolase_C"/>
</dbReference>
<dbReference type="InterPro" id="IPR020809">
    <property type="entry name" value="Enolase_CS"/>
</dbReference>
<dbReference type="InterPro" id="IPR020811">
    <property type="entry name" value="Enolase_N"/>
</dbReference>
<dbReference type="NCBIfam" id="TIGR01060">
    <property type="entry name" value="eno"/>
    <property type="match status" value="1"/>
</dbReference>
<dbReference type="PANTHER" id="PTHR11902">
    <property type="entry name" value="ENOLASE"/>
    <property type="match status" value="1"/>
</dbReference>
<dbReference type="PANTHER" id="PTHR11902:SF1">
    <property type="entry name" value="ENOLASE"/>
    <property type="match status" value="1"/>
</dbReference>
<dbReference type="Pfam" id="PF00113">
    <property type="entry name" value="Enolase_C"/>
    <property type="match status" value="1"/>
</dbReference>
<dbReference type="Pfam" id="PF03952">
    <property type="entry name" value="Enolase_N"/>
    <property type="match status" value="1"/>
</dbReference>
<dbReference type="PIRSF" id="PIRSF001400">
    <property type="entry name" value="Enolase"/>
    <property type="match status" value="1"/>
</dbReference>
<dbReference type="PRINTS" id="PR00148">
    <property type="entry name" value="ENOLASE"/>
</dbReference>
<dbReference type="SFLD" id="SFLDS00001">
    <property type="entry name" value="Enolase"/>
    <property type="match status" value="1"/>
</dbReference>
<dbReference type="SFLD" id="SFLDF00002">
    <property type="entry name" value="enolase"/>
    <property type="match status" value="1"/>
</dbReference>
<dbReference type="SMART" id="SM01192">
    <property type="entry name" value="Enolase_C"/>
    <property type="match status" value="1"/>
</dbReference>
<dbReference type="SMART" id="SM01193">
    <property type="entry name" value="Enolase_N"/>
    <property type="match status" value="1"/>
</dbReference>
<dbReference type="SUPFAM" id="SSF51604">
    <property type="entry name" value="Enolase C-terminal domain-like"/>
    <property type="match status" value="1"/>
</dbReference>
<dbReference type="SUPFAM" id="SSF54826">
    <property type="entry name" value="Enolase N-terminal domain-like"/>
    <property type="match status" value="1"/>
</dbReference>
<dbReference type="PROSITE" id="PS00164">
    <property type="entry name" value="ENOLASE"/>
    <property type="match status" value="1"/>
</dbReference>
<accession>C0Z6L3</accession>
<evidence type="ECO:0000255" key="1">
    <source>
        <dbReference type="HAMAP-Rule" id="MF_00318"/>
    </source>
</evidence>